<sequence>MAEKQTAKRNRREEILQSLALMLESSDGSQRITTAKLAASVGVSEAALYRHFPSKTRMFDSLIEFIEDSLITRINLILKDEKDTTARLRLIVLLLLGFGERNPGLTRILTGHALMFEQDRLQGRINQLFERIEAQLRQVLREKRMREGEGYTTDETLLASQLLAFCEGMLSRFVRSEFKYRPTDDFDARWPLIAAQLQ</sequence>
<evidence type="ECO:0000255" key="1">
    <source>
        <dbReference type="HAMAP-Rule" id="MF_01839"/>
    </source>
</evidence>
<evidence type="ECO:0000305" key="2"/>
<proteinExistence type="inferred from homology"/>
<comment type="function">
    <text evidence="1">Required for nucleoid occlusion (NO) phenomenon, which prevents Z-ring formation and cell division over the nucleoid. Acts as a DNA-associated cell division inhibitor that binds simultaneously chromosomal DNA and FtsZ, and disrupts the assembly of FtsZ polymers. SlmA-DNA-binding sequences (SBS) are dispersed on non-Ter regions of the chromosome, preventing FtsZ polymerization at these regions.</text>
</comment>
<comment type="subunit">
    <text evidence="1">Homodimer. Interacts with FtsZ.</text>
</comment>
<comment type="subcellular location">
    <subcellularLocation>
        <location evidence="1">Cytoplasm</location>
        <location evidence="1">Nucleoid</location>
    </subcellularLocation>
</comment>
<comment type="similarity">
    <text evidence="1">Belongs to the nucleoid occlusion factor SlmA family.</text>
</comment>
<comment type="sequence caution" evidence="2">
    <conflict type="erroneous initiation">
        <sequence resource="EMBL-CDS" id="AAN82901"/>
    </conflict>
</comment>
<protein>
    <recommendedName>
        <fullName evidence="1">Nucleoid occlusion factor SlmA</fullName>
    </recommendedName>
</protein>
<dbReference type="EMBL" id="AE014075">
    <property type="protein sequence ID" value="AAN82901.1"/>
    <property type="status" value="ALT_INIT"/>
    <property type="molecule type" value="Genomic_DNA"/>
</dbReference>
<dbReference type="RefSeq" id="WP_000818603.1">
    <property type="nucleotide sequence ID" value="NZ_CP051263.1"/>
</dbReference>
<dbReference type="SMR" id="Q8FC86"/>
<dbReference type="STRING" id="199310.c4465"/>
<dbReference type="GeneID" id="86944372"/>
<dbReference type="KEGG" id="ecc:c4465"/>
<dbReference type="eggNOG" id="COG1309">
    <property type="taxonomic scope" value="Bacteria"/>
</dbReference>
<dbReference type="HOGENOM" id="CLU_069356_5_0_6"/>
<dbReference type="Proteomes" id="UP000001410">
    <property type="component" value="Chromosome"/>
</dbReference>
<dbReference type="GO" id="GO:0043590">
    <property type="term" value="C:bacterial nucleoid"/>
    <property type="evidence" value="ECO:0007669"/>
    <property type="project" value="UniProtKB-UniRule"/>
</dbReference>
<dbReference type="GO" id="GO:0005737">
    <property type="term" value="C:cytoplasm"/>
    <property type="evidence" value="ECO:0007669"/>
    <property type="project" value="UniProtKB-UniRule"/>
</dbReference>
<dbReference type="GO" id="GO:0003700">
    <property type="term" value="F:DNA-binding transcription factor activity"/>
    <property type="evidence" value="ECO:0007669"/>
    <property type="project" value="TreeGrafter"/>
</dbReference>
<dbReference type="GO" id="GO:0000976">
    <property type="term" value="F:transcription cis-regulatory region binding"/>
    <property type="evidence" value="ECO:0007669"/>
    <property type="project" value="TreeGrafter"/>
</dbReference>
<dbReference type="GO" id="GO:0051301">
    <property type="term" value="P:cell division"/>
    <property type="evidence" value="ECO:0007669"/>
    <property type="project" value="UniProtKB-KW"/>
</dbReference>
<dbReference type="GO" id="GO:0010974">
    <property type="term" value="P:negative regulation of division septum assembly"/>
    <property type="evidence" value="ECO:0007669"/>
    <property type="project" value="InterPro"/>
</dbReference>
<dbReference type="FunFam" id="1.10.357.10:FF:000002">
    <property type="entry name" value="Nucleoid occlusion factor SlmA"/>
    <property type="match status" value="1"/>
</dbReference>
<dbReference type="Gene3D" id="1.10.357.10">
    <property type="entry name" value="Tetracycline Repressor, domain 2"/>
    <property type="match status" value="1"/>
</dbReference>
<dbReference type="HAMAP" id="MF_01839">
    <property type="entry name" value="NO_factor_SlmA"/>
    <property type="match status" value="1"/>
</dbReference>
<dbReference type="InterPro" id="IPR023772">
    <property type="entry name" value="DNA-bd_HTH_TetR-type_CS"/>
</dbReference>
<dbReference type="InterPro" id="IPR009057">
    <property type="entry name" value="Homeodomain-like_sf"/>
</dbReference>
<dbReference type="InterPro" id="IPR050109">
    <property type="entry name" value="HTH-type_TetR-like_transc_reg"/>
</dbReference>
<dbReference type="InterPro" id="IPR001647">
    <property type="entry name" value="HTH_TetR"/>
</dbReference>
<dbReference type="InterPro" id="IPR023769">
    <property type="entry name" value="NO_SlmA"/>
</dbReference>
<dbReference type="InterPro" id="IPR054580">
    <property type="entry name" value="SlmA-like_C"/>
</dbReference>
<dbReference type="InterPro" id="IPR036271">
    <property type="entry name" value="Tet_transcr_reg_TetR-rel_C_sf"/>
</dbReference>
<dbReference type="NCBIfam" id="NF007015">
    <property type="entry name" value="PRK09480.1"/>
    <property type="match status" value="1"/>
</dbReference>
<dbReference type="PANTHER" id="PTHR30055">
    <property type="entry name" value="HTH-TYPE TRANSCRIPTIONAL REGULATOR RUTR"/>
    <property type="match status" value="1"/>
</dbReference>
<dbReference type="PANTHER" id="PTHR30055:SF183">
    <property type="entry name" value="NUCLEOID OCCLUSION FACTOR SLMA"/>
    <property type="match status" value="1"/>
</dbReference>
<dbReference type="Pfam" id="PF22276">
    <property type="entry name" value="SlmA-like_C"/>
    <property type="match status" value="1"/>
</dbReference>
<dbReference type="Pfam" id="PF00440">
    <property type="entry name" value="TetR_N"/>
    <property type="match status" value="1"/>
</dbReference>
<dbReference type="SUPFAM" id="SSF46689">
    <property type="entry name" value="Homeodomain-like"/>
    <property type="match status" value="1"/>
</dbReference>
<dbReference type="SUPFAM" id="SSF48498">
    <property type="entry name" value="Tetracyclin repressor-like, C-terminal domain"/>
    <property type="match status" value="1"/>
</dbReference>
<dbReference type="PROSITE" id="PS01081">
    <property type="entry name" value="HTH_TETR_1"/>
    <property type="match status" value="1"/>
</dbReference>
<dbReference type="PROSITE" id="PS50977">
    <property type="entry name" value="HTH_TETR_2"/>
    <property type="match status" value="1"/>
</dbReference>
<accession>Q8FC86</accession>
<feature type="chain" id="PRO_0000198968" description="Nucleoid occlusion factor SlmA">
    <location>
        <begin position="1"/>
        <end position="198"/>
    </location>
</feature>
<feature type="domain" description="HTH tetR-type" evidence="1">
    <location>
        <begin position="10"/>
        <end position="70"/>
    </location>
</feature>
<feature type="DNA-binding region" description="H-T-H motif" evidence="1">
    <location>
        <begin position="33"/>
        <end position="52"/>
    </location>
</feature>
<feature type="coiled-coil region" evidence="1">
    <location>
        <begin position="117"/>
        <end position="144"/>
    </location>
</feature>
<organism>
    <name type="scientific">Escherichia coli O6:H1 (strain CFT073 / ATCC 700928 / UPEC)</name>
    <dbReference type="NCBI Taxonomy" id="199310"/>
    <lineage>
        <taxon>Bacteria</taxon>
        <taxon>Pseudomonadati</taxon>
        <taxon>Pseudomonadota</taxon>
        <taxon>Gammaproteobacteria</taxon>
        <taxon>Enterobacterales</taxon>
        <taxon>Enterobacteriaceae</taxon>
        <taxon>Escherichia</taxon>
    </lineage>
</organism>
<name>SLMA_ECOL6</name>
<keyword id="KW-0131">Cell cycle</keyword>
<keyword id="KW-0132">Cell division</keyword>
<keyword id="KW-0175">Coiled coil</keyword>
<keyword id="KW-0963">Cytoplasm</keyword>
<keyword id="KW-0238">DNA-binding</keyword>
<keyword id="KW-1185">Reference proteome</keyword>
<reference key="1">
    <citation type="journal article" date="2002" name="Proc. Natl. Acad. Sci. U.S.A.">
        <title>Extensive mosaic structure revealed by the complete genome sequence of uropathogenic Escherichia coli.</title>
        <authorList>
            <person name="Welch R.A."/>
            <person name="Burland V."/>
            <person name="Plunkett G. III"/>
            <person name="Redford P."/>
            <person name="Roesch P."/>
            <person name="Rasko D."/>
            <person name="Buckles E.L."/>
            <person name="Liou S.-R."/>
            <person name="Boutin A."/>
            <person name="Hackett J."/>
            <person name="Stroud D."/>
            <person name="Mayhew G.F."/>
            <person name="Rose D.J."/>
            <person name="Zhou S."/>
            <person name="Schwartz D.C."/>
            <person name="Perna N.T."/>
            <person name="Mobley H.L.T."/>
            <person name="Donnenberg M.S."/>
            <person name="Blattner F.R."/>
        </authorList>
    </citation>
    <scope>NUCLEOTIDE SEQUENCE [LARGE SCALE GENOMIC DNA]</scope>
    <source>
        <strain>CFT073 / ATCC 700928 / UPEC</strain>
    </source>
</reference>
<gene>
    <name evidence="1" type="primary">slmA</name>
    <name type="ordered locus">c4465</name>
</gene>